<comment type="function">
    <text>May be involved in transcriptional regulation.</text>
</comment>
<comment type="interaction">
    <interactant intactId="EBI-14513896">
        <id>Q9UK13</id>
    </interactant>
    <interactant intactId="EBI-12012928">
        <id>P60371</id>
        <label>KRTAP10-6</label>
    </interactant>
    <organismsDiffer>false</organismsDiffer>
    <experiments>3</experiments>
</comment>
<comment type="interaction">
    <interactant intactId="EBI-14513896">
        <id>Q9UK13</id>
    </interactant>
    <interactant intactId="EBI-10182930">
        <id>P43361</id>
        <label>MAGEA8</label>
    </interactant>
    <organismsDiffer>false</organismsDiffer>
    <experiments>3</experiments>
</comment>
<comment type="interaction">
    <interactant intactId="EBI-14513896">
        <id>Q9UK13</id>
    </interactant>
    <interactant intactId="EBI-724076">
        <id>Q99750</id>
        <label>MDFI</label>
    </interactant>
    <organismsDiffer>false</organismsDiffer>
    <experiments>3</experiments>
</comment>
<comment type="subcellular location">
    <subcellularLocation>
        <location evidence="7">Nucleus</location>
    </subcellularLocation>
</comment>
<comment type="similarity">
    <text evidence="7">Belongs to the krueppel C2H2-type zinc-finger protein family.</text>
</comment>
<accession>Q9UK13</accession>
<accession>A0A087WT08</accession>
<accession>B2RAI6</accession>
<accession>K7EIT6</accession>
<accession>Q2M2H2</accession>
<accession>Q9P1U8</accession>
<name>ZN221_HUMAN</name>
<protein>
    <recommendedName>
        <fullName>Zinc finger protein 221</fullName>
    </recommendedName>
</protein>
<evidence type="ECO:0000255" key="1">
    <source>
        <dbReference type="PROSITE-ProRule" id="PRU00042"/>
    </source>
</evidence>
<evidence type="ECO:0000255" key="2">
    <source>
        <dbReference type="PROSITE-ProRule" id="PRU00119"/>
    </source>
</evidence>
<evidence type="ECO:0000269" key="3">
    <source>
    </source>
</evidence>
<evidence type="ECO:0000269" key="4">
    <source>
    </source>
</evidence>
<evidence type="ECO:0000269" key="5">
    <source>
    </source>
</evidence>
<evidence type="ECO:0000269" key="6">
    <source ref="5"/>
</evidence>
<evidence type="ECO:0000305" key="7"/>
<reference key="1">
    <citation type="journal article" date="2003" name="Genome Res.">
        <title>Differential expansion of zinc-finger transcription factor loci in homologous human and mouse gene clusters.</title>
        <authorList>
            <person name="Shannon M."/>
            <person name="Hamilton A.T."/>
            <person name="Gordon L."/>
            <person name="Branscomb E."/>
            <person name="Stubbs L."/>
        </authorList>
    </citation>
    <scope>NUCLEOTIDE SEQUENCE [MRNA]</scope>
    <scope>VARIANTS ILE-179; ARG-256; THR-519 AND ARG-557</scope>
</reference>
<reference key="2">
    <citation type="submission" date="2000-04" db="EMBL/GenBank/DDBJ databases">
        <title>Sequence analysis of a 1Mb region in 19q13.2 containing a zinc finger gene cluster.</title>
        <authorList>
            <person name="Kodoyianni V."/>
            <person name="Ge Y."/>
            <person name="Krummel G.K."/>
            <person name="Kvikstad E."/>
            <person name="Grable L."/>
            <person name="Severin J."/>
            <person name="Gordon L."/>
            <person name="Shannon M."/>
            <person name="Brower A."/>
            <person name="Olsen A.S."/>
            <person name="Smith L.M."/>
        </authorList>
    </citation>
    <scope>NUCLEOTIDE SEQUENCE [GENOMIC DNA]</scope>
</reference>
<reference key="3">
    <citation type="journal article" date="2004" name="Nat. Genet.">
        <title>Complete sequencing and characterization of 21,243 full-length human cDNAs.</title>
        <authorList>
            <person name="Ota T."/>
            <person name="Suzuki Y."/>
            <person name="Nishikawa T."/>
            <person name="Otsuki T."/>
            <person name="Sugiyama T."/>
            <person name="Irie R."/>
            <person name="Wakamatsu A."/>
            <person name="Hayashi K."/>
            <person name="Sato H."/>
            <person name="Nagai K."/>
            <person name="Kimura K."/>
            <person name="Makita H."/>
            <person name="Sekine M."/>
            <person name="Obayashi M."/>
            <person name="Nishi T."/>
            <person name="Shibahara T."/>
            <person name="Tanaka T."/>
            <person name="Ishii S."/>
            <person name="Yamamoto J."/>
            <person name="Saito K."/>
            <person name="Kawai Y."/>
            <person name="Isono Y."/>
            <person name="Nakamura Y."/>
            <person name="Nagahari K."/>
            <person name="Murakami K."/>
            <person name="Yasuda T."/>
            <person name="Iwayanagi T."/>
            <person name="Wagatsuma M."/>
            <person name="Shiratori A."/>
            <person name="Sudo H."/>
            <person name="Hosoiri T."/>
            <person name="Kaku Y."/>
            <person name="Kodaira H."/>
            <person name="Kondo H."/>
            <person name="Sugawara M."/>
            <person name="Takahashi M."/>
            <person name="Kanda K."/>
            <person name="Yokoi T."/>
            <person name="Furuya T."/>
            <person name="Kikkawa E."/>
            <person name="Omura Y."/>
            <person name="Abe K."/>
            <person name="Kamihara K."/>
            <person name="Katsuta N."/>
            <person name="Sato K."/>
            <person name="Tanikawa M."/>
            <person name="Yamazaki M."/>
            <person name="Ninomiya K."/>
            <person name="Ishibashi T."/>
            <person name="Yamashita H."/>
            <person name="Murakawa K."/>
            <person name="Fujimori K."/>
            <person name="Tanai H."/>
            <person name="Kimata M."/>
            <person name="Watanabe M."/>
            <person name="Hiraoka S."/>
            <person name="Chiba Y."/>
            <person name="Ishida S."/>
            <person name="Ono Y."/>
            <person name="Takiguchi S."/>
            <person name="Watanabe S."/>
            <person name="Yosida M."/>
            <person name="Hotuta T."/>
            <person name="Kusano J."/>
            <person name="Kanehori K."/>
            <person name="Takahashi-Fujii A."/>
            <person name="Hara H."/>
            <person name="Tanase T.-O."/>
            <person name="Nomura Y."/>
            <person name="Togiya S."/>
            <person name="Komai F."/>
            <person name="Hara R."/>
            <person name="Takeuchi K."/>
            <person name="Arita M."/>
            <person name="Imose N."/>
            <person name="Musashino K."/>
            <person name="Yuuki H."/>
            <person name="Oshima A."/>
            <person name="Sasaki N."/>
            <person name="Aotsuka S."/>
            <person name="Yoshikawa Y."/>
            <person name="Matsunawa H."/>
            <person name="Ichihara T."/>
            <person name="Shiohata N."/>
            <person name="Sano S."/>
            <person name="Moriya S."/>
            <person name="Momiyama H."/>
            <person name="Satoh N."/>
            <person name="Takami S."/>
            <person name="Terashima Y."/>
            <person name="Suzuki O."/>
            <person name="Nakagawa S."/>
            <person name="Senoh A."/>
            <person name="Mizoguchi H."/>
            <person name="Goto Y."/>
            <person name="Shimizu F."/>
            <person name="Wakebe H."/>
            <person name="Hishigaki H."/>
            <person name="Watanabe T."/>
            <person name="Sugiyama A."/>
            <person name="Takemoto M."/>
            <person name="Kawakami B."/>
            <person name="Yamazaki M."/>
            <person name="Watanabe K."/>
            <person name="Kumagai A."/>
            <person name="Itakura S."/>
            <person name="Fukuzumi Y."/>
            <person name="Fujimori Y."/>
            <person name="Komiyama M."/>
            <person name="Tashiro H."/>
            <person name="Tanigami A."/>
            <person name="Fujiwara T."/>
            <person name="Ono T."/>
            <person name="Yamada K."/>
            <person name="Fujii Y."/>
            <person name="Ozaki K."/>
            <person name="Hirao M."/>
            <person name="Ohmori Y."/>
            <person name="Kawabata A."/>
            <person name="Hikiji T."/>
            <person name="Kobatake N."/>
            <person name="Inagaki H."/>
            <person name="Ikema Y."/>
            <person name="Okamoto S."/>
            <person name="Okitani R."/>
            <person name="Kawakami T."/>
            <person name="Noguchi S."/>
            <person name="Itoh T."/>
            <person name="Shigeta K."/>
            <person name="Senba T."/>
            <person name="Matsumura K."/>
            <person name="Nakajima Y."/>
            <person name="Mizuno T."/>
            <person name="Morinaga M."/>
            <person name="Sasaki M."/>
            <person name="Togashi T."/>
            <person name="Oyama M."/>
            <person name="Hata H."/>
            <person name="Watanabe M."/>
            <person name="Komatsu T."/>
            <person name="Mizushima-Sugano J."/>
            <person name="Satoh T."/>
            <person name="Shirai Y."/>
            <person name="Takahashi Y."/>
            <person name="Nakagawa K."/>
            <person name="Okumura K."/>
            <person name="Nagase T."/>
            <person name="Nomura N."/>
            <person name="Kikuchi H."/>
            <person name="Masuho Y."/>
            <person name="Yamashita R."/>
            <person name="Nakai K."/>
            <person name="Yada T."/>
            <person name="Nakamura Y."/>
            <person name="Ohara O."/>
            <person name="Isogai T."/>
            <person name="Sugano S."/>
        </authorList>
    </citation>
    <scope>NUCLEOTIDE SEQUENCE [LARGE SCALE MRNA]</scope>
    <scope>VARIANTS ILE-179; ARG-256; THR-519 AND ARG-557</scope>
    <source>
        <tissue>Testis</tissue>
    </source>
</reference>
<reference key="4">
    <citation type="journal article" date="2004" name="Nature">
        <title>The DNA sequence and biology of human chromosome 19.</title>
        <authorList>
            <person name="Grimwood J."/>
            <person name="Gordon L.A."/>
            <person name="Olsen A.S."/>
            <person name="Terry A."/>
            <person name="Schmutz J."/>
            <person name="Lamerdin J.E."/>
            <person name="Hellsten U."/>
            <person name="Goodstein D."/>
            <person name="Couronne O."/>
            <person name="Tran-Gyamfi M."/>
            <person name="Aerts A."/>
            <person name="Altherr M."/>
            <person name="Ashworth L."/>
            <person name="Bajorek E."/>
            <person name="Black S."/>
            <person name="Branscomb E."/>
            <person name="Caenepeel S."/>
            <person name="Carrano A.V."/>
            <person name="Caoile C."/>
            <person name="Chan Y.M."/>
            <person name="Christensen M."/>
            <person name="Cleland C.A."/>
            <person name="Copeland A."/>
            <person name="Dalin E."/>
            <person name="Dehal P."/>
            <person name="Denys M."/>
            <person name="Detter J.C."/>
            <person name="Escobar J."/>
            <person name="Flowers D."/>
            <person name="Fotopulos D."/>
            <person name="Garcia C."/>
            <person name="Georgescu A.M."/>
            <person name="Glavina T."/>
            <person name="Gomez M."/>
            <person name="Gonzales E."/>
            <person name="Groza M."/>
            <person name="Hammon N."/>
            <person name="Hawkins T."/>
            <person name="Haydu L."/>
            <person name="Ho I."/>
            <person name="Huang W."/>
            <person name="Israni S."/>
            <person name="Jett J."/>
            <person name="Kadner K."/>
            <person name="Kimball H."/>
            <person name="Kobayashi A."/>
            <person name="Larionov V."/>
            <person name="Leem S.-H."/>
            <person name="Lopez F."/>
            <person name="Lou Y."/>
            <person name="Lowry S."/>
            <person name="Malfatti S."/>
            <person name="Martinez D."/>
            <person name="McCready P.M."/>
            <person name="Medina C."/>
            <person name="Morgan J."/>
            <person name="Nelson K."/>
            <person name="Nolan M."/>
            <person name="Ovcharenko I."/>
            <person name="Pitluck S."/>
            <person name="Pollard M."/>
            <person name="Popkie A.P."/>
            <person name="Predki P."/>
            <person name="Quan G."/>
            <person name="Ramirez L."/>
            <person name="Rash S."/>
            <person name="Retterer J."/>
            <person name="Rodriguez A."/>
            <person name="Rogers S."/>
            <person name="Salamov A."/>
            <person name="Salazar A."/>
            <person name="She X."/>
            <person name="Smith D."/>
            <person name="Slezak T."/>
            <person name="Solovyev V."/>
            <person name="Thayer N."/>
            <person name="Tice H."/>
            <person name="Tsai M."/>
            <person name="Ustaszewska A."/>
            <person name="Vo N."/>
            <person name="Wagner M."/>
            <person name="Wheeler J."/>
            <person name="Wu K."/>
            <person name="Xie G."/>
            <person name="Yang J."/>
            <person name="Dubchak I."/>
            <person name="Furey T.S."/>
            <person name="DeJong P."/>
            <person name="Dickson M."/>
            <person name="Gordon D."/>
            <person name="Eichler E.E."/>
            <person name="Pennacchio L.A."/>
            <person name="Richardson P."/>
            <person name="Stubbs L."/>
            <person name="Rokhsar D.S."/>
            <person name="Myers R.M."/>
            <person name="Rubin E.M."/>
            <person name="Lucas S.M."/>
        </authorList>
    </citation>
    <scope>NUCLEOTIDE SEQUENCE [LARGE SCALE GENOMIC DNA]</scope>
</reference>
<reference key="5">
    <citation type="submission" date="2005-07" db="EMBL/GenBank/DDBJ databases">
        <authorList>
            <person name="Mural R.J."/>
            <person name="Istrail S."/>
            <person name="Sutton G.G."/>
            <person name="Florea L."/>
            <person name="Halpern A.L."/>
            <person name="Mobarry C.M."/>
            <person name="Lippert R."/>
            <person name="Walenz B."/>
            <person name="Shatkay H."/>
            <person name="Dew I."/>
            <person name="Miller J.R."/>
            <person name="Flanigan M.J."/>
            <person name="Edwards N.J."/>
            <person name="Bolanos R."/>
            <person name="Fasulo D."/>
            <person name="Halldorsson B.V."/>
            <person name="Hannenhalli S."/>
            <person name="Turner R."/>
            <person name="Yooseph S."/>
            <person name="Lu F."/>
            <person name="Nusskern D.R."/>
            <person name="Shue B.C."/>
            <person name="Zheng X.H."/>
            <person name="Zhong F."/>
            <person name="Delcher A.L."/>
            <person name="Huson D.H."/>
            <person name="Kravitz S.A."/>
            <person name="Mouchard L."/>
            <person name="Reinert K."/>
            <person name="Remington K.A."/>
            <person name="Clark A.G."/>
            <person name="Waterman M.S."/>
            <person name="Eichler E.E."/>
            <person name="Adams M.D."/>
            <person name="Hunkapiller M.W."/>
            <person name="Myers E.W."/>
            <person name="Venter J.C."/>
        </authorList>
    </citation>
    <scope>NUCLEOTIDE SEQUENCE [LARGE SCALE GENOMIC DNA]</scope>
    <scope>VARIANTS ILE-179; ARG-256; THR-519 AND ARG-557</scope>
</reference>
<reference key="6">
    <citation type="journal article" date="2004" name="Genome Res.">
        <title>The status, quality, and expansion of the NIH full-length cDNA project: the Mammalian Gene Collection (MGC).</title>
        <authorList>
            <consortium name="The MGC Project Team"/>
        </authorList>
    </citation>
    <scope>NUCLEOTIDE SEQUENCE [LARGE SCALE MRNA]</scope>
    <scope>VARIANTS ILE-179; ARG-256; THR-519 AND ARG-557</scope>
    <source>
        <tissue>Brain</tissue>
    </source>
</reference>
<dbReference type="EMBL" id="AF187987">
    <property type="protein sequence ID" value="AAF04103.1"/>
    <property type="molecule type" value="mRNA"/>
</dbReference>
<dbReference type="EMBL" id="AC035150">
    <property type="protein sequence ID" value="AAF63029.1"/>
    <property type="molecule type" value="Genomic_DNA"/>
</dbReference>
<dbReference type="EMBL" id="AK314207">
    <property type="protein sequence ID" value="BAG36883.1"/>
    <property type="molecule type" value="mRNA"/>
</dbReference>
<dbReference type="EMBL" id="AC006213">
    <property type="status" value="NOT_ANNOTATED_CDS"/>
    <property type="molecule type" value="Genomic_DNA"/>
</dbReference>
<dbReference type="EMBL" id="KF459580">
    <property type="status" value="NOT_ANNOTATED_CDS"/>
    <property type="molecule type" value="Genomic_DNA"/>
</dbReference>
<dbReference type="EMBL" id="CH471126">
    <property type="protein sequence ID" value="EAW57237.1"/>
    <property type="molecule type" value="Genomic_DNA"/>
</dbReference>
<dbReference type="EMBL" id="BC111981">
    <property type="protein sequence ID" value="AAI11982.1"/>
    <property type="molecule type" value="mRNA"/>
</dbReference>
<dbReference type="EMBL" id="BC113426">
    <property type="protein sequence ID" value="AAI13427.1"/>
    <property type="molecule type" value="mRNA"/>
</dbReference>
<dbReference type="CCDS" id="CCDS12633.1"/>
<dbReference type="RefSeq" id="NP_001284517.1">
    <property type="nucleotide sequence ID" value="NM_001297588.2"/>
</dbReference>
<dbReference type="RefSeq" id="NP_001284518.1">
    <property type="nucleotide sequence ID" value="NM_001297589.2"/>
</dbReference>
<dbReference type="RefSeq" id="NP_037491.2">
    <property type="nucleotide sequence ID" value="NM_013359.3"/>
</dbReference>
<dbReference type="RefSeq" id="XP_016882721.1">
    <property type="nucleotide sequence ID" value="XM_017027232.1"/>
</dbReference>
<dbReference type="RefSeq" id="XP_047295308.1">
    <property type="nucleotide sequence ID" value="XM_047439352.1"/>
</dbReference>
<dbReference type="SMR" id="Q9UK13"/>
<dbReference type="BioGRID" id="113454">
    <property type="interactions" value="10"/>
</dbReference>
<dbReference type="FunCoup" id="Q9UK13">
    <property type="interactions" value="6"/>
</dbReference>
<dbReference type="IntAct" id="Q9UK13">
    <property type="interactions" value="6"/>
</dbReference>
<dbReference type="STRING" id="9606.ENSP00000251269"/>
<dbReference type="iPTMnet" id="Q9UK13"/>
<dbReference type="PhosphoSitePlus" id="Q9UK13"/>
<dbReference type="BioMuta" id="ZNF221"/>
<dbReference type="DMDM" id="311033541"/>
<dbReference type="jPOST" id="Q9UK13"/>
<dbReference type="MassIVE" id="Q9UK13"/>
<dbReference type="PaxDb" id="9606-ENSP00000251269"/>
<dbReference type="PeptideAtlas" id="Q9UK13"/>
<dbReference type="ProteomicsDB" id="84704"/>
<dbReference type="Pumba" id="Q9UK13"/>
<dbReference type="Antibodypedia" id="815">
    <property type="antibodies" value="43 antibodies from 12 providers"/>
</dbReference>
<dbReference type="DNASU" id="7638"/>
<dbReference type="Ensembl" id="ENST00000251269.9">
    <property type="protein sequence ID" value="ENSP00000251269.4"/>
    <property type="gene ID" value="ENSG00000159905.15"/>
</dbReference>
<dbReference type="Ensembl" id="ENST00000587682.6">
    <property type="protein sequence ID" value="ENSP00000467367.1"/>
    <property type="gene ID" value="ENSG00000159905.15"/>
</dbReference>
<dbReference type="Ensembl" id="ENST00000592350.5">
    <property type="protein sequence ID" value="ENSP00000467446.1"/>
    <property type="gene ID" value="ENSG00000159905.15"/>
</dbReference>
<dbReference type="Ensembl" id="ENST00000622072.1">
    <property type="protein sequence ID" value="ENSP00000477876.1"/>
    <property type="gene ID" value="ENSG00000159905.15"/>
</dbReference>
<dbReference type="GeneID" id="7638"/>
<dbReference type="KEGG" id="hsa:7638"/>
<dbReference type="MANE-Select" id="ENST00000587682.6">
    <property type="protein sequence ID" value="ENSP00000467367.1"/>
    <property type="RefSeq nucleotide sequence ID" value="NM_001297588.2"/>
    <property type="RefSeq protein sequence ID" value="NP_001284517.1"/>
</dbReference>
<dbReference type="UCSC" id="uc002oxx.3">
    <property type="organism name" value="human"/>
</dbReference>
<dbReference type="UCSC" id="uc060zov.1">
    <property type="organism name" value="human"/>
</dbReference>
<dbReference type="AGR" id="HGNC:13014"/>
<dbReference type="CTD" id="7638"/>
<dbReference type="GeneCards" id="ZNF221"/>
<dbReference type="HGNC" id="HGNC:13014">
    <property type="gene designation" value="ZNF221"/>
</dbReference>
<dbReference type="HPA" id="ENSG00000159905">
    <property type="expression patterns" value="Low tissue specificity"/>
</dbReference>
<dbReference type="neXtProt" id="NX_Q9UK13"/>
<dbReference type="OpenTargets" id="ENSG00000159905"/>
<dbReference type="PharmGKB" id="PA37593"/>
<dbReference type="VEuPathDB" id="HostDB:ENSG00000159905"/>
<dbReference type="eggNOG" id="KOG1721">
    <property type="taxonomic scope" value="Eukaryota"/>
</dbReference>
<dbReference type="GeneTree" id="ENSGT00940000160225"/>
<dbReference type="InParanoid" id="Q9UK13"/>
<dbReference type="OMA" id="FWMMKTT"/>
<dbReference type="OrthoDB" id="9411774at2759"/>
<dbReference type="PAN-GO" id="Q9UK13">
    <property type="GO annotations" value="3 GO annotations based on evolutionary models"/>
</dbReference>
<dbReference type="PhylomeDB" id="Q9UK13"/>
<dbReference type="PathwayCommons" id="Q9UK13"/>
<dbReference type="Reactome" id="R-HSA-212436">
    <property type="pathway name" value="Generic Transcription Pathway"/>
</dbReference>
<dbReference type="SignaLink" id="Q9UK13"/>
<dbReference type="BioGRID-ORCS" id="7638">
    <property type="hits" value="15 hits in 1137 CRISPR screens"/>
</dbReference>
<dbReference type="GenomeRNAi" id="7638"/>
<dbReference type="Pharos" id="Q9UK13">
    <property type="development level" value="Tdark"/>
</dbReference>
<dbReference type="PRO" id="PR:Q9UK13"/>
<dbReference type="Proteomes" id="UP000005640">
    <property type="component" value="Chromosome 19"/>
</dbReference>
<dbReference type="RNAct" id="Q9UK13">
    <property type="molecule type" value="protein"/>
</dbReference>
<dbReference type="Bgee" id="ENSG00000159905">
    <property type="expression patterns" value="Expressed in male germ line stem cell (sensu Vertebrata) in testis and 117 other cell types or tissues"/>
</dbReference>
<dbReference type="ExpressionAtlas" id="Q9UK13">
    <property type="expression patterns" value="baseline and differential"/>
</dbReference>
<dbReference type="GO" id="GO:0005634">
    <property type="term" value="C:nucleus"/>
    <property type="evidence" value="ECO:0007669"/>
    <property type="project" value="UniProtKB-SubCell"/>
</dbReference>
<dbReference type="GO" id="GO:0000981">
    <property type="term" value="F:DNA-binding transcription factor activity, RNA polymerase II-specific"/>
    <property type="evidence" value="ECO:0000318"/>
    <property type="project" value="GO_Central"/>
</dbReference>
<dbReference type="GO" id="GO:0000978">
    <property type="term" value="F:RNA polymerase II cis-regulatory region sequence-specific DNA binding"/>
    <property type="evidence" value="ECO:0000318"/>
    <property type="project" value="GO_Central"/>
</dbReference>
<dbReference type="GO" id="GO:0008270">
    <property type="term" value="F:zinc ion binding"/>
    <property type="evidence" value="ECO:0007669"/>
    <property type="project" value="UniProtKB-KW"/>
</dbReference>
<dbReference type="GO" id="GO:0006355">
    <property type="term" value="P:regulation of DNA-templated transcription"/>
    <property type="evidence" value="ECO:0000318"/>
    <property type="project" value="GO_Central"/>
</dbReference>
<dbReference type="CDD" id="cd07765">
    <property type="entry name" value="KRAB_A-box"/>
    <property type="match status" value="1"/>
</dbReference>
<dbReference type="FunFam" id="3.30.160.60:FF:000040">
    <property type="entry name" value="RB associated KRAB zinc finger"/>
    <property type="match status" value="1"/>
</dbReference>
<dbReference type="FunFam" id="3.30.160.60:FF:001313">
    <property type="entry name" value="Zinc finger protein 155"/>
    <property type="match status" value="1"/>
</dbReference>
<dbReference type="FunFam" id="3.30.160.60:FF:000650">
    <property type="entry name" value="Zinc finger protein 197"/>
    <property type="match status" value="1"/>
</dbReference>
<dbReference type="FunFam" id="3.30.160.60:FF:000688">
    <property type="entry name" value="zinc finger protein 197 isoform X1"/>
    <property type="match status" value="1"/>
</dbReference>
<dbReference type="FunFam" id="3.30.160.60:FF:002101">
    <property type="entry name" value="Zinc finger protein 224"/>
    <property type="match status" value="1"/>
</dbReference>
<dbReference type="FunFam" id="3.30.160.60:FF:001634">
    <property type="entry name" value="Zinc finger protein 224, isoform CRA_a"/>
    <property type="match status" value="1"/>
</dbReference>
<dbReference type="FunFam" id="3.30.160.60:FF:002239">
    <property type="entry name" value="Zinc finger protein 226"/>
    <property type="match status" value="1"/>
</dbReference>
<dbReference type="FunFam" id="3.30.160.60:FF:000623">
    <property type="entry name" value="Zinc finger protein 234"/>
    <property type="match status" value="1"/>
</dbReference>
<dbReference type="FunFam" id="3.30.160.60:FF:002153">
    <property type="entry name" value="Zinc finger protein 30"/>
    <property type="match status" value="1"/>
</dbReference>
<dbReference type="FunFam" id="3.30.160.60:FF:002343">
    <property type="entry name" value="Zinc finger protein 33A"/>
    <property type="match status" value="1"/>
</dbReference>
<dbReference type="FunFam" id="3.30.160.60:FF:000663">
    <property type="entry name" value="Zinc finger protein 45"/>
    <property type="match status" value="1"/>
</dbReference>
<dbReference type="FunFam" id="3.30.160.60:FF:001286">
    <property type="entry name" value="Zinc finger protein 485"/>
    <property type="match status" value="1"/>
</dbReference>
<dbReference type="FunFam" id="3.30.160.60:FF:001465">
    <property type="entry name" value="Zinc finger protein 560"/>
    <property type="match status" value="1"/>
</dbReference>
<dbReference type="FunFam" id="3.30.160.60:FF:000213">
    <property type="entry name" value="Zinc finger protein 624"/>
    <property type="match status" value="1"/>
</dbReference>
<dbReference type="FunFam" id="3.30.160.60:FF:000102">
    <property type="entry name" value="zinc finger protein 850 isoform X1"/>
    <property type="match status" value="1"/>
</dbReference>
<dbReference type="Gene3D" id="6.10.140.140">
    <property type="match status" value="1"/>
</dbReference>
<dbReference type="Gene3D" id="3.30.160.60">
    <property type="entry name" value="Classic Zinc Finger"/>
    <property type="match status" value="15"/>
</dbReference>
<dbReference type="InterPro" id="IPR001909">
    <property type="entry name" value="KRAB"/>
</dbReference>
<dbReference type="InterPro" id="IPR036051">
    <property type="entry name" value="KRAB_dom_sf"/>
</dbReference>
<dbReference type="InterPro" id="IPR036236">
    <property type="entry name" value="Znf_C2H2_sf"/>
</dbReference>
<dbReference type="InterPro" id="IPR013087">
    <property type="entry name" value="Znf_C2H2_type"/>
</dbReference>
<dbReference type="PANTHER" id="PTHR24399">
    <property type="entry name" value="ZINC FINGER AND BTB DOMAIN-CONTAINING"/>
    <property type="match status" value="1"/>
</dbReference>
<dbReference type="PANTHER" id="PTHR24399:SF68">
    <property type="entry name" value="ZINC FINGER PROTEIN 358-RELATED"/>
    <property type="match status" value="1"/>
</dbReference>
<dbReference type="Pfam" id="PF01352">
    <property type="entry name" value="KRAB"/>
    <property type="match status" value="1"/>
</dbReference>
<dbReference type="Pfam" id="PF00096">
    <property type="entry name" value="zf-C2H2"/>
    <property type="match status" value="11"/>
</dbReference>
<dbReference type="SMART" id="SM00349">
    <property type="entry name" value="KRAB"/>
    <property type="match status" value="1"/>
</dbReference>
<dbReference type="SMART" id="SM00355">
    <property type="entry name" value="ZnF_C2H2"/>
    <property type="match status" value="15"/>
</dbReference>
<dbReference type="SUPFAM" id="SSF57667">
    <property type="entry name" value="beta-beta-alpha zinc fingers"/>
    <property type="match status" value="8"/>
</dbReference>
<dbReference type="SUPFAM" id="SSF109640">
    <property type="entry name" value="KRAB domain (Kruppel-associated box)"/>
    <property type="match status" value="1"/>
</dbReference>
<dbReference type="PROSITE" id="PS50805">
    <property type="entry name" value="KRAB"/>
    <property type="match status" value="1"/>
</dbReference>
<dbReference type="PROSITE" id="PS00028">
    <property type="entry name" value="ZINC_FINGER_C2H2_1"/>
    <property type="match status" value="15"/>
</dbReference>
<dbReference type="PROSITE" id="PS50157">
    <property type="entry name" value="ZINC_FINGER_C2H2_2"/>
    <property type="match status" value="15"/>
</dbReference>
<organism>
    <name type="scientific">Homo sapiens</name>
    <name type="common">Human</name>
    <dbReference type="NCBI Taxonomy" id="9606"/>
    <lineage>
        <taxon>Eukaryota</taxon>
        <taxon>Metazoa</taxon>
        <taxon>Chordata</taxon>
        <taxon>Craniata</taxon>
        <taxon>Vertebrata</taxon>
        <taxon>Euteleostomi</taxon>
        <taxon>Mammalia</taxon>
        <taxon>Eutheria</taxon>
        <taxon>Euarchontoglires</taxon>
        <taxon>Primates</taxon>
        <taxon>Haplorrhini</taxon>
        <taxon>Catarrhini</taxon>
        <taxon>Hominidae</taxon>
        <taxon>Homo</taxon>
    </lineage>
</organism>
<feature type="chain" id="PRO_0000047462" description="Zinc finger protein 221">
    <location>
        <begin position="1"/>
        <end position="617"/>
    </location>
</feature>
<feature type="domain" description="KRAB" evidence="2">
    <location>
        <begin position="30"/>
        <end position="100"/>
    </location>
</feature>
<feature type="zinc finger region" description="C2H2-type 1" evidence="1">
    <location>
        <begin position="170"/>
        <end position="192"/>
    </location>
</feature>
<feature type="zinc finger region" description="C2H2-type 2" evidence="1">
    <location>
        <begin position="198"/>
        <end position="220"/>
    </location>
</feature>
<feature type="zinc finger region" description="C2H2-type 3" evidence="1">
    <location>
        <begin position="226"/>
        <end position="248"/>
    </location>
</feature>
<feature type="zinc finger region" description="C2H2-type 4; degenerate" evidence="1">
    <location>
        <begin position="254"/>
        <end position="276"/>
    </location>
</feature>
<feature type="zinc finger region" description="C2H2-type 5" evidence="1">
    <location>
        <begin position="282"/>
        <end position="304"/>
    </location>
</feature>
<feature type="zinc finger region" description="C2H2-type 6" evidence="1">
    <location>
        <begin position="310"/>
        <end position="332"/>
    </location>
</feature>
<feature type="zinc finger region" description="C2H2-type 7" evidence="1">
    <location>
        <begin position="338"/>
        <end position="360"/>
    </location>
</feature>
<feature type="zinc finger region" description="C2H2-type 8" evidence="1">
    <location>
        <begin position="366"/>
        <end position="388"/>
    </location>
</feature>
<feature type="zinc finger region" description="C2H2-type 9" evidence="1">
    <location>
        <begin position="394"/>
        <end position="416"/>
    </location>
</feature>
<feature type="zinc finger region" description="C2H2-type 10" evidence="1">
    <location>
        <begin position="422"/>
        <end position="444"/>
    </location>
</feature>
<feature type="zinc finger region" description="C2H2-type 11" evidence="1">
    <location>
        <begin position="450"/>
        <end position="472"/>
    </location>
</feature>
<feature type="zinc finger region" description="C2H2-type 12" evidence="1">
    <location>
        <begin position="478"/>
        <end position="500"/>
    </location>
</feature>
<feature type="zinc finger region" description="C2H2-type 13" evidence="1">
    <location>
        <begin position="506"/>
        <end position="528"/>
    </location>
</feature>
<feature type="zinc finger region" description="C2H2-type 14" evidence="1">
    <location>
        <begin position="534"/>
        <end position="556"/>
    </location>
</feature>
<feature type="zinc finger region" description="C2H2-type 15" evidence="1">
    <location>
        <begin position="562"/>
        <end position="584"/>
    </location>
</feature>
<feature type="sequence variant" id="VAR_033557" description="In dbSNP:rs16976937.">
    <original>V</original>
    <variation>M</variation>
    <location>
        <position position="165"/>
    </location>
</feature>
<feature type="sequence variant" id="VAR_033558" description="In dbSNP:rs454301." evidence="3 4 5 6">
    <original>F</original>
    <variation>I</variation>
    <location>
        <position position="179"/>
    </location>
</feature>
<feature type="sequence variant" id="VAR_033559" description="In dbSNP:rs439676." evidence="3 4 5 6">
    <original>C</original>
    <variation>R</variation>
    <location>
        <position position="256"/>
    </location>
</feature>
<feature type="sequence variant" id="VAR_024201" description="In dbSNP:rs435590.">
    <original>P</original>
    <variation>A</variation>
    <location>
        <position position="337"/>
    </location>
</feature>
<feature type="sequence variant" id="VAR_024202" description="In dbSNP:rs365745." evidence="3 4 5 6">
    <original>S</original>
    <variation>T</variation>
    <location>
        <position position="519"/>
    </location>
</feature>
<feature type="sequence variant" id="VAR_024203" description="In dbSNP:rs366111." evidence="3 4 5 6">
    <original>G</original>
    <variation>R</variation>
    <location>
        <position position="557"/>
    </location>
</feature>
<feature type="sequence conflict" description="In Ref. 1; AAF04103." evidence="7" ref="1">
    <original>C</original>
    <variation>Y</variation>
    <location>
        <position position="14"/>
    </location>
</feature>
<gene>
    <name type="primary">ZNF221</name>
</gene>
<sequence>MISPSLELLHSGLCKFPEVEGKMTTFKEAVTFKDVAVVFTEEELGLLDPAQRKLYRDVMLENFRNLLSVGNQPFHQDTFHFLGKEKFWKMKTTSQREGNSGGKIQIEMETVPEAGPHEEWSCQQIWEQIASDLTRSQNSIRNSSQFFKEGDVPCQIEARLSISHVQQKPYRCNECKQSFSDVSVFDLHQQSHSGEKSHTCGECGKSFCYSPALHIHQRVHMGEKCYKCDVCGKEFNQSSHLQTHQRVHTGEKPFKCGQCGKGFHSRSALNVHCKLHTGEKPYNCEECGKAFIHDSQLQEHQRIHTGEKPFKCDICGKSFRVRSRLNRHSMVHTGEKPFRCDTCGKNFRQRSALNSHSMVHIEEKPYKCEQCGKGFICRRDFCKHQMVHTGEKPYNCKECGKTFRWSSCLLNHQQVHSGQKSFKCEECGKGFYTNSRRSSHQRSHNGEKPYNCEECGKDYKRRLDLEFHQRVHTGERPYNCKECGKSFGWASCLLKHQRLHSGEKPFKCEECGKRFTQSSQLHSHQTCHTGEKLYKCEQCEKGYNSKFNLDMHQRVHGGERPYNCKECGKSFGWASCLLKHQRLHSGEKPLKSGVWEEIYSEFTASFTSVSLCGRKAI</sequence>
<proteinExistence type="evidence at protein level"/>
<keyword id="KW-0238">DNA-binding</keyword>
<keyword id="KW-0479">Metal-binding</keyword>
<keyword id="KW-0539">Nucleus</keyword>
<keyword id="KW-1267">Proteomics identification</keyword>
<keyword id="KW-1185">Reference proteome</keyword>
<keyword id="KW-0677">Repeat</keyword>
<keyword id="KW-0804">Transcription</keyword>
<keyword id="KW-0805">Transcription regulation</keyword>
<keyword id="KW-0862">Zinc</keyword>
<keyword id="KW-0863">Zinc-finger</keyword>